<evidence type="ECO:0000255" key="1">
    <source>
        <dbReference type="HAMAP-Rule" id="MF_01626"/>
    </source>
</evidence>
<reference key="1">
    <citation type="journal article" date="2009" name="PLoS Genet.">
        <title>Organised genome dynamics in the Escherichia coli species results in highly diverse adaptive paths.</title>
        <authorList>
            <person name="Touchon M."/>
            <person name="Hoede C."/>
            <person name="Tenaillon O."/>
            <person name="Barbe V."/>
            <person name="Baeriswyl S."/>
            <person name="Bidet P."/>
            <person name="Bingen E."/>
            <person name="Bonacorsi S."/>
            <person name="Bouchier C."/>
            <person name="Bouvet O."/>
            <person name="Calteau A."/>
            <person name="Chiapello H."/>
            <person name="Clermont O."/>
            <person name="Cruveiller S."/>
            <person name="Danchin A."/>
            <person name="Diard M."/>
            <person name="Dossat C."/>
            <person name="Karoui M.E."/>
            <person name="Frapy E."/>
            <person name="Garry L."/>
            <person name="Ghigo J.M."/>
            <person name="Gilles A.M."/>
            <person name="Johnson J."/>
            <person name="Le Bouguenec C."/>
            <person name="Lescat M."/>
            <person name="Mangenot S."/>
            <person name="Martinez-Jehanne V."/>
            <person name="Matic I."/>
            <person name="Nassif X."/>
            <person name="Oztas S."/>
            <person name="Petit M.A."/>
            <person name="Pichon C."/>
            <person name="Rouy Z."/>
            <person name="Ruf C.S."/>
            <person name="Schneider D."/>
            <person name="Tourret J."/>
            <person name="Vacherie B."/>
            <person name="Vallenet D."/>
            <person name="Medigue C."/>
            <person name="Rocha E.P.C."/>
            <person name="Denamur E."/>
        </authorList>
    </citation>
    <scope>NUCLEOTIDE SEQUENCE [LARGE SCALE GENOMIC DNA]</scope>
    <source>
        <strain>IAI39 / ExPEC</strain>
    </source>
</reference>
<organism>
    <name type="scientific">Escherichia coli O7:K1 (strain IAI39 / ExPEC)</name>
    <dbReference type="NCBI Taxonomy" id="585057"/>
    <lineage>
        <taxon>Bacteria</taxon>
        <taxon>Pseudomonadati</taxon>
        <taxon>Pseudomonadota</taxon>
        <taxon>Gammaproteobacteria</taxon>
        <taxon>Enterobacterales</taxon>
        <taxon>Enterobacteriaceae</taxon>
        <taxon>Escherichia</taxon>
    </lineage>
</organism>
<gene>
    <name evidence="1" type="primary">viaA</name>
    <name type="ordered locus">ECIAI39_4349</name>
</gene>
<feature type="chain" id="PRO_1000186144" description="Regulatory protein ViaA">
    <location>
        <begin position="1"/>
        <end position="483"/>
    </location>
</feature>
<dbReference type="EMBL" id="CU928164">
    <property type="protein sequence ID" value="CAR20455.1"/>
    <property type="molecule type" value="Genomic_DNA"/>
</dbReference>
<dbReference type="RefSeq" id="WP_000956643.1">
    <property type="nucleotide sequence ID" value="NC_011750.1"/>
</dbReference>
<dbReference type="RefSeq" id="YP_002410224.1">
    <property type="nucleotide sequence ID" value="NC_011750.1"/>
</dbReference>
<dbReference type="SMR" id="B7NR47"/>
<dbReference type="STRING" id="585057.ECIAI39_4349"/>
<dbReference type="KEGG" id="ect:ECIAI39_4349"/>
<dbReference type="PATRIC" id="fig|585057.6.peg.4495"/>
<dbReference type="HOGENOM" id="CLU_022130_0_0_6"/>
<dbReference type="Proteomes" id="UP000000749">
    <property type="component" value="Chromosome"/>
</dbReference>
<dbReference type="GO" id="GO:0005829">
    <property type="term" value="C:cytosol"/>
    <property type="evidence" value="ECO:0007669"/>
    <property type="project" value="TreeGrafter"/>
</dbReference>
<dbReference type="CDD" id="cd01462">
    <property type="entry name" value="VWA_YIEM_type"/>
    <property type="match status" value="1"/>
</dbReference>
<dbReference type="Gene3D" id="3.40.50.410">
    <property type="entry name" value="von Willebrand factor, type A domain"/>
    <property type="match status" value="1"/>
</dbReference>
<dbReference type="HAMAP" id="MF_01626">
    <property type="entry name" value="ViaA"/>
    <property type="match status" value="1"/>
</dbReference>
<dbReference type="InterPro" id="IPR008912">
    <property type="entry name" value="Uncharacterised_CoxE"/>
</dbReference>
<dbReference type="InterPro" id="IPR023481">
    <property type="entry name" value="Uncharacterised_ViaA"/>
</dbReference>
<dbReference type="InterPro" id="IPR002035">
    <property type="entry name" value="VWF_A"/>
</dbReference>
<dbReference type="InterPro" id="IPR036465">
    <property type="entry name" value="vWFA_dom_sf"/>
</dbReference>
<dbReference type="NCBIfam" id="NF008230">
    <property type="entry name" value="PRK10997.1"/>
    <property type="match status" value="1"/>
</dbReference>
<dbReference type="PANTHER" id="PTHR36846">
    <property type="entry name" value="PROTEIN VIAA"/>
    <property type="match status" value="1"/>
</dbReference>
<dbReference type="PANTHER" id="PTHR36846:SF1">
    <property type="entry name" value="PROTEIN VIAA"/>
    <property type="match status" value="1"/>
</dbReference>
<dbReference type="Pfam" id="PF05762">
    <property type="entry name" value="VWA_CoxE"/>
    <property type="match status" value="1"/>
</dbReference>
<dbReference type="SMART" id="SM00327">
    <property type="entry name" value="VWA"/>
    <property type="match status" value="1"/>
</dbReference>
<dbReference type="SUPFAM" id="SSF53300">
    <property type="entry name" value="vWA-like"/>
    <property type="match status" value="1"/>
</dbReference>
<protein>
    <recommendedName>
        <fullName evidence="1">Regulatory protein ViaA</fullName>
    </recommendedName>
    <alternativeName>
        <fullName evidence="1">VWA interacting with AAA+ ATPase</fullName>
    </alternativeName>
</protein>
<accession>B7NR47</accession>
<keyword id="KW-0143">Chaperone</keyword>
<keyword id="KW-0963">Cytoplasm</keyword>
<name>VIAA_ECO7I</name>
<proteinExistence type="inferred from homology"/>
<sequence length="483" mass="55932">MLTLDTLNVMLAVSEEGLIEEMIIALLASPQLAVFFEKFPRLKAAITDDVPRWREALRSRLKDARVPPELTEEVMCYQQSQLLSTPQFIVQLPQILDLLHRLNSPWAEQARQLVDANSTITSALHTLFLQRWRLSLIVQATTLNQQLLEEEREQLLSEVQERMTLSGQLEPILADNNTAAGRLWDMSAGQLKRGDYQLIVKYGEFLNEQPELKRLAEQLGRSREAKSIPRNDAQMETFRTMVREPATVPEQVDGLQQSDDILRLLPPELATLGITELEYEFYRRLVEKQLLTYRLHGESWREKVIERPVVHKDYDEQPRGPFIVCVDTSGSMGGFNEQCAKAFCLALMRIALAENRRCYIMLFSTEIVRYELSGPQGIEQAIRFLSQQFRGGTDLASCFRAIMERLQSREWFDADAVVISDFIAQRLPDDVTSKVKELQRVHQYRFHAVAMSAHGKPGIMRIFDHIWRFNTGMRSRLLRRWRR</sequence>
<comment type="function">
    <text evidence="1">Component of the RavA-ViaA chaperone complex, which may act on the membrane to optimize the function of some of the respiratory chains. ViaA stimulates the ATPase activity of RavA.</text>
</comment>
<comment type="subunit">
    <text evidence="1">Homodimer. Interacts with RavA.</text>
</comment>
<comment type="subcellular location">
    <subcellularLocation>
        <location evidence="1">Cytoplasm</location>
    </subcellularLocation>
</comment>
<comment type="similarity">
    <text evidence="1">Belongs to the ViaA family.</text>
</comment>